<dbReference type="EC" id="2.7.8.7" evidence="1"/>
<dbReference type="EMBL" id="CP000051">
    <property type="protein sequence ID" value="AAX50352.1"/>
    <property type="molecule type" value="Genomic_DNA"/>
</dbReference>
<dbReference type="RefSeq" id="WP_009871448.1">
    <property type="nucleotide sequence ID" value="NC_007429.1"/>
</dbReference>
<dbReference type="SMR" id="Q3KMS0"/>
<dbReference type="KEGG" id="cta:CTA_0106"/>
<dbReference type="HOGENOM" id="CLU_089696_0_2_0"/>
<dbReference type="Proteomes" id="UP000002532">
    <property type="component" value="Chromosome"/>
</dbReference>
<dbReference type="GO" id="GO:0005737">
    <property type="term" value="C:cytoplasm"/>
    <property type="evidence" value="ECO:0007669"/>
    <property type="project" value="UniProtKB-SubCell"/>
</dbReference>
<dbReference type="GO" id="GO:0008897">
    <property type="term" value="F:holo-[acyl-carrier-protein] synthase activity"/>
    <property type="evidence" value="ECO:0007669"/>
    <property type="project" value="UniProtKB-UniRule"/>
</dbReference>
<dbReference type="GO" id="GO:0000287">
    <property type="term" value="F:magnesium ion binding"/>
    <property type="evidence" value="ECO:0007669"/>
    <property type="project" value="UniProtKB-UniRule"/>
</dbReference>
<dbReference type="GO" id="GO:0006633">
    <property type="term" value="P:fatty acid biosynthetic process"/>
    <property type="evidence" value="ECO:0007669"/>
    <property type="project" value="UniProtKB-UniRule"/>
</dbReference>
<dbReference type="Gene3D" id="3.90.470.20">
    <property type="entry name" value="4'-phosphopantetheinyl transferase domain"/>
    <property type="match status" value="1"/>
</dbReference>
<dbReference type="HAMAP" id="MF_00101">
    <property type="entry name" value="AcpS"/>
    <property type="match status" value="1"/>
</dbReference>
<dbReference type="InterPro" id="IPR008278">
    <property type="entry name" value="4-PPantetheinyl_Trfase_dom"/>
</dbReference>
<dbReference type="InterPro" id="IPR037143">
    <property type="entry name" value="4-PPantetheinyl_Trfase_dom_sf"/>
</dbReference>
<dbReference type="InterPro" id="IPR002582">
    <property type="entry name" value="ACPS"/>
</dbReference>
<dbReference type="InterPro" id="IPR004568">
    <property type="entry name" value="Ppantetheine-prot_Trfase_dom"/>
</dbReference>
<dbReference type="NCBIfam" id="TIGR00516">
    <property type="entry name" value="acpS"/>
    <property type="match status" value="1"/>
</dbReference>
<dbReference type="NCBIfam" id="TIGR00556">
    <property type="entry name" value="pantethn_trn"/>
    <property type="match status" value="1"/>
</dbReference>
<dbReference type="Pfam" id="PF01648">
    <property type="entry name" value="ACPS"/>
    <property type="match status" value="1"/>
</dbReference>
<dbReference type="SUPFAM" id="SSF56214">
    <property type="entry name" value="4'-phosphopantetheinyl transferase"/>
    <property type="match status" value="1"/>
</dbReference>
<name>ACPS_CHLTA</name>
<organism>
    <name type="scientific">Chlamydia trachomatis serovar A (strain ATCC VR-571B / DSM 19440 / HAR-13)</name>
    <dbReference type="NCBI Taxonomy" id="315277"/>
    <lineage>
        <taxon>Bacteria</taxon>
        <taxon>Pseudomonadati</taxon>
        <taxon>Chlamydiota</taxon>
        <taxon>Chlamydiia</taxon>
        <taxon>Chlamydiales</taxon>
        <taxon>Chlamydiaceae</taxon>
        <taxon>Chlamydia/Chlamydophila group</taxon>
        <taxon>Chlamydia</taxon>
    </lineage>
</organism>
<comment type="function">
    <text evidence="1">Transfers the 4'-phosphopantetheine moiety from coenzyme A to a Ser of acyl-carrier-protein.</text>
</comment>
<comment type="catalytic activity">
    <reaction evidence="1">
        <text>apo-[ACP] + CoA = holo-[ACP] + adenosine 3',5'-bisphosphate + H(+)</text>
        <dbReference type="Rhea" id="RHEA:12068"/>
        <dbReference type="Rhea" id="RHEA-COMP:9685"/>
        <dbReference type="Rhea" id="RHEA-COMP:9690"/>
        <dbReference type="ChEBI" id="CHEBI:15378"/>
        <dbReference type="ChEBI" id="CHEBI:29999"/>
        <dbReference type="ChEBI" id="CHEBI:57287"/>
        <dbReference type="ChEBI" id="CHEBI:58343"/>
        <dbReference type="ChEBI" id="CHEBI:64479"/>
        <dbReference type="EC" id="2.7.8.7"/>
    </reaction>
</comment>
<comment type="cofactor">
    <cofactor evidence="1">
        <name>Mg(2+)</name>
        <dbReference type="ChEBI" id="CHEBI:18420"/>
    </cofactor>
</comment>
<comment type="subcellular location">
    <subcellularLocation>
        <location evidence="1">Cytoplasm</location>
    </subcellularLocation>
</comment>
<comment type="similarity">
    <text evidence="1">Belongs to the P-Pant transferase superfamily. AcpS family.</text>
</comment>
<sequence>MFGVGIDIIEIDRIRKSYQTYGDRFLKKIFTEGERVYCFSKSNPYASLAARFAAKEAVAKALGTGIGKLLKWKEIEMCRDSRQPQVVVPEALLCSLGVKRVLLSVSHSREYATAVAIAE</sequence>
<gene>
    <name evidence="1" type="primary">acpS</name>
    <name type="ordered locus">CTA_0106</name>
</gene>
<reference key="1">
    <citation type="journal article" date="2005" name="Infect. Immun.">
        <title>Comparative genomic analysis of Chlamydia trachomatis oculotropic and genitotropic strains.</title>
        <authorList>
            <person name="Carlson J.H."/>
            <person name="Porcella S.F."/>
            <person name="McClarty G."/>
            <person name="Caldwell H.D."/>
        </authorList>
    </citation>
    <scope>NUCLEOTIDE SEQUENCE [LARGE SCALE GENOMIC DNA]</scope>
    <source>
        <strain>ATCC VR-571B / DSM 19440 / HAR-13</strain>
    </source>
</reference>
<proteinExistence type="inferred from homology"/>
<accession>Q3KMS0</accession>
<evidence type="ECO:0000255" key="1">
    <source>
        <dbReference type="HAMAP-Rule" id="MF_00101"/>
    </source>
</evidence>
<keyword id="KW-0963">Cytoplasm</keyword>
<keyword id="KW-0275">Fatty acid biosynthesis</keyword>
<keyword id="KW-0276">Fatty acid metabolism</keyword>
<keyword id="KW-0444">Lipid biosynthesis</keyword>
<keyword id="KW-0443">Lipid metabolism</keyword>
<keyword id="KW-0460">Magnesium</keyword>
<keyword id="KW-0479">Metal-binding</keyword>
<keyword id="KW-0808">Transferase</keyword>
<feature type="chain" id="PRO_0000228278" description="Holo-[acyl-carrier-protein] synthase">
    <location>
        <begin position="1"/>
        <end position="119"/>
    </location>
</feature>
<feature type="binding site" evidence="1">
    <location>
        <position position="7"/>
    </location>
    <ligand>
        <name>Mg(2+)</name>
        <dbReference type="ChEBI" id="CHEBI:18420"/>
    </ligand>
</feature>
<feature type="binding site" evidence="1">
    <location>
        <position position="56"/>
    </location>
    <ligand>
        <name>Mg(2+)</name>
        <dbReference type="ChEBI" id="CHEBI:18420"/>
    </ligand>
</feature>
<protein>
    <recommendedName>
        <fullName evidence="1">Holo-[acyl-carrier-protein] synthase</fullName>
        <shortName evidence="1">Holo-ACP synthase</shortName>
        <ecNumber evidence="1">2.7.8.7</ecNumber>
    </recommendedName>
    <alternativeName>
        <fullName evidence="1">4'-phosphopantetheinyl transferase AcpS</fullName>
    </alternativeName>
</protein>